<protein>
    <recommendedName>
        <fullName>Cysteine-rich receptor-like protein kinase 7</fullName>
        <shortName>Cysteine-rich RLK7</shortName>
        <ecNumber>2.7.11.-</ecNumber>
    </recommendedName>
</protein>
<gene>
    <name type="primary">CRK7</name>
    <name type="ordered locus">At4g23150</name>
    <name type="ORF">F21P8.40</name>
</gene>
<name>CRK7_ARATH</name>
<keyword id="KW-0067">ATP-binding</keyword>
<keyword id="KW-0325">Glycoprotein</keyword>
<keyword id="KW-0418">Kinase</keyword>
<keyword id="KW-0472">Membrane</keyword>
<keyword id="KW-0547">Nucleotide-binding</keyword>
<keyword id="KW-0597">Phosphoprotein</keyword>
<keyword id="KW-0675">Receptor</keyword>
<keyword id="KW-1185">Reference proteome</keyword>
<keyword id="KW-0677">Repeat</keyword>
<keyword id="KW-0723">Serine/threonine-protein kinase</keyword>
<keyword id="KW-0732">Signal</keyword>
<keyword id="KW-0808">Transferase</keyword>
<keyword id="KW-0812">Transmembrane</keyword>
<keyword id="KW-1133">Transmembrane helix</keyword>
<evidence type="ECO:0000250" key="1">
    <source>
        <dbReference type="UniProtKB" id="O48814"/>
    </source>
</evidence>
<evidence type="ECO:0000255" key="2"/>
<evidence type="ECO:0000255" key="3">
    <source>
        <dbReference type="PROSITE-ProRule" id="PRU00159"/>
    </source>
</evidence>
<evidence type="ECO:0000255" key="4">
    <source>
        <dbReference type="PROSITE-ProRule" id="PRU00806"/>
    </source>
</evidence>
<evidence type="ECO:0000255" key="5">
    <source>
        <dbReference type="PROSITE-ProRule" id="PRU10027"/>
    </source>
</evidence>
<evidence type="ECO:0000256" key="6">
    <source>
        <dbReference type="SAM" id="MobiDB-lite"/>
    </source>
</evidence>
<evidence type="ECO:0000305" key="7"/>
<reference key="1">
    <citation type="journal article" date="1999" name="Nature">
        <title>Sequence and analysis of chromosome 4 of the plant Arabidopsis thaliana.</title>
        <authorList>
            <person name="Mayer K.F.X."/>
            <person name="Schueller C."/>
            <person name="Wambutt R."/>
            <person name="Murphy G."/>
            <person name="Volckaert G."/>
            <person name="Pohl T."/>
            <person name="Duesterhoeft A."/>
            <person name="Stiekema W."/>
            <person name="Entian K.-D."/>
            <person name="Terryn N."/>
            <person name="Harris B."/>
            <person name="Ansorge W."/>
            <person name="Brandt P."/>
            <person name="Grivell L.A."/>
            <person name="Rieger M."/>
            <person name="Weichselgartner M."/>
            <person name="de Simone V."/>
            <person name="Obermaier B."/>
            <person name="Mache R."/>
            <person name="Mueller M."/>
            <person name="Kreis M."/>
            <person name="Delseny M."/>
            <person name="Puigdomenech P."/>
            <person name="Watson M."/>
            <person name="Schmidtheini T."/>
            <person name="Reichert B."/>
            <person name="Portetelle D."/>
            <person name="Perez-Alonso M."/>
            <person name="Boutry M."/>
            <person name="Bancroft I."/>
            <person name="Vos P."/>
            <person name="Hoheisel J."/>
            <person name="Zimmermann W."/>
            <person name="Wedler H."/>
            <person name="Ridley P."/>
            <person name="Langham S.-A."/>
            <person name="McCullagh B."/>
            <person name="Bilham L."/>
            <person name="Robben J."/>
            <person name="van der Schueren J."/>
            <person name="Grymonprez B."/>
            <person name="Chuang Y.-J."/>
            <person name="Vandenbussche F."/>
            <person name="Braeken M."/>
            <person name="Weltjens I."/>
            <person name="Voet M."/>
            <person name="Bastiaens I."/>
            <person name="Aert R."/>
            <person name="Defoor E."/>
            <person name="Weitzenegger T."/>
            <person name="Bothe G."/>
            <person name="Ramsperger U."/>
            <person name="Hilbert H."/>
            <person name="Braun M."/>
            <person name="Holzer E."/>
            <person name="Brandt A."/>
            <person name="Peters S."/>
            <person name="van Staveren M."/>
            <person name="Dirkse W."/>
            <person name="Mooijman P."/>
            <person name="Klein Lankhorst R."/>
            <person name="Rose M."/>
            <person name="Hauf J."/>
            <person name="Koetter P."/>
            <person name="Berneiser S."/>
            <person name="Hempel S."/>
            <person name="Feldpausch M."/>
            <person name="Lamberth S."/>
            <person name="Van den Daele H."/>
            <person name="De Keyser A."/>
            <person name="Buysshaert C."/>
            <person name="Gielen J."/>
            <person name="Villarroel R."/>
            <person name="De Clercq R."/>
            <person name="van Montagu M."/>
            <person name="Rogers J."/>
            <person name="Cronin A."/>
            <person name="Quail M.A."/>
            <person name="Bray-Allen S."/>
            <person name="Clark L."/>
            <person name="Doggett J."/>
            <person name="Hall S."/>
            <person name="Kay M."/>
            <person name="Lennard N."/>
            <person name="McLay K."/>
            <person name="Mayes R."/>
            <person name="Pettett A."/>
            <person name="Rajandream M.A."/>
            <person name="Lyne M."/>
            <person name="Benes V."/>
            <person name="Rechmann S."/>
            <person name="Borkova D."/>
            <person name="Bloecker H."/>
            <person name="Scharfe M."/>
            <person name="Grimm M."/>
            <person name="Loehnert T.-H."/>
            <person name="Dose S."/>
            <person name="de Haan M."/>
            <person name="Maarse A.C."/>
            <person name="Schaefer M."/>
            <person name="Mueller-Auer S."/>
            <person name="Gabel C."/>
            <person name="Fuchs M."/>
            <person name="Fartmann B."/>
            <person name="Granderath K."/>
            <person name="Dauner D."/>
            <person name="Herzl A."/>
            <person name="Neumann S."/>
            <person name="Argiriou A."/>
            <person name="Vitale D."/>
            <person name="Liguori R."/>
            <person name="Piravandi E."/>
            <person name="Massenet O."/>
            <person name="Quigley F."/>
            <person name="Clabauld G."/>
            <person name="Muendlein A."/>
            <person name="Felber R."/>
            <person name="Schnabl S."/>
            <person name="Hiller R."/>
            <person name="Schmidt W."/>
            <person name="Lecharny A."/>
            <person name="Aubourg S."/>
            <person name="Chefdor F."/>
            <person name="Cooke R."/>
            <person name="Berger C."/>
            <person name="Monfort A."/>
            <person name="Casacuberta E."/>
            <person name="Gibbons T."/>
            <person name="Weber N."/>
            <person name="Vandenbol M."/>
            <person name="Bargues M."/>
            <person name="Terol J."/>
            <person name="Torres A."/>
            <person name="Perez-Perez A."/>
            <person name="Purnelle B."/>
            <person name="Bent E."/>
            <person name="Johnson S."/>
            <person name="Tacon D."/>
            <person name="Jesse T."/>
            <person name="Heijnen L."/>
            <person name="Schwarz S."/>
            <person name="Scholler P."/>
            <person name="Heber S."/>
            <person name="Francs P."/>
            <person name="Bielke C."/>
            <person name="Frishman D."/>
            <person name="Haase D."/>
            <person name="Lemcke K."/>
            <person name="Mewes H.-W."/>
            <person name="Stocker S."/>
            <person name="Zaccaria P."/>
            <person name="Bevan M."/>
            <person name="Wilson R.K."/>
            <person name="de la Bastide M."/>
            <person name="Habermann K."/>
            <person name="Parnell L."/>
            <person name="Dedhia N."/>
            <person name="Gnoj L."/>
            <person name="Schutz K."/>
            <person name="Huang E."/>
            <person name="Spiegel L."/>
            <person name="Sekhon M."/>
            <person name="Murray J."/>
            <person name="Sheet P."/>
            <person name="Cordes M."/>
            <person name="Abu-Threideh J."/>
            <person name="Stoneking T."/>
            <person name="Kalicki J."/>
            <person name="Graves T."/>
            <person name="Harmon G."/>
            <person name="Edwards J."/>
            <person name="Latreille P."/>
            <person name="Courtney L."/>
            <person name="Cloud J."/>
            <person name="Abbott A."/>
            <person name="Scott K."/>
            <person name="Johnson D."/>
            <person name="Minx P."/>
            <person name="Bentley D."/>
            <person name="Fulton B."/>
            <person name="Miller N."/>
            <person name="Greco T."/>
            <person name="Kemp K."/>
            <person name="Kramer J."/>
            <person name="Fulton L."/>
            <person name="Mardis E."/>
            <person name="Dante M."/>
            <person name="Pepin K."/>
            <person name="Hillier L.W."/>
            <person name="Nelson J."/>
            <person name="Spieth J."/>
            <person name="Ryan E."/>
            <person name="Andrews S."/>
            <person name="Geisel C."/>
            <person name="Layman D."/>
            <person name="Du H."/>
            <person name="Ali J."/>
            <person name="Berghoff A."/>
            <person name="Jones K."/>
            <person name="Drone K."/>
            <person name="Cotton M."/>
            <person name="Joshu C."/>
            <person name="Antonoiu B."/>
            <person name="Zidanic M."/>
            <person name="Strong C."/>
            <person name="Sun H."/>
            <person name="Lamar B."/>
            <person name="Yordan C."/>
            <person name="Ma P."/>
            <person name="Zhong J."/>
            <person name="Preston R."/>
            <person name="Vil D."/>
            <person name="Shekher M."/>
            <person name="Matero A."/>
            <person name="Shah R."/>
            <person name="Swaby I.K."/>
            <person name="O'Shaughnessy A."/>
            <person name="Rodriguez M."/>
            <person name="Hoffman J."/>
            <person name="Till S."/>
            <person name="Granat S."/>
            <person name="Shohdy N."/>
            <person name="Hasegawa A."/>
            <person name="Hameed A."/>
            <person name="Lodhi M."/>
            <person name="Johnson A."/>
            <person name="Chen E."/>
            <person name="Marra M.A."/>
            <person name="Martienssen R."/>
            <person name="McCombie W.R."/>
        </authorList>
    </citation>
    <scope>NUCLEOTIDE SEQUENCE [LARGE SCALE GENOMIC DNA]</scope>
    <source>
        <strain>cv. Columbia</strain>
    </source>
</reference>
<reference key="2">
    <citation type="journal article" date="2017" name="Plant J.">
        <title>Araport11: a complete reannotation of the Arabidopsis thaliana reference genome.</title>
        <authorList>
            <person name="Cheng C.Y."/>
            <person name="Krishnakumar V."/>
            <person name="Chan A.P."/>
            <person name="Thibaud-Nissen F."/>
            <person name="Schobel S."/>
            <person name="Town C.D."/>
        </authorList>
    </citation>
    <scope>GENOME REANNOTATION</scope>
    <source>
        <strain>cv. Columbia</strain>
    </source>
</reference>
<reference key="3">
    <citation type="journal article" date="2003" name="Science">
        <title>Empirical analysis of transcriptional activity in the Arabidopsis genome.</title>
        <authorList>
            <person name="Yamada K."/>
            <person name="Lim J."/>
            <person name="Dale J.M."/>
            <person name="Chen H."/>
            <person name="Shinn P."/>
            <person name="Palm C.J."/>
            <person name="Southwick A.M."/>
            <person name="Wu H.C."/>
            <person name="Kim C.J."/>
            <person name="Nguyen M."/>
            <person name="Pham P.K."/>
            <person name="Cheuk R.F."/>
            <person name="Karlin-Newmann G."/>
            <person name="Liu S.X."/>
            <person name="Lam B."/>
            <person name="Sakano H."/>
            <person name="Wu T."/>
            <person name="Yu G."/>
            <person name="Miranda M."/>
            <person name="Quach H.L."/>
            <person name="Tripp M."/>
            <person name="Chang C.H."/>
            <person name="Lee J.M."/>
            <person name="Toriumi M.J."/>
            <person name="Chan M.M."/>
            <person name="Tang C.C."/>
            <person name="Onodera C.S."/>
            <person name="Deng J.M."/>
            <person name="Akiyama K."/>
            <person name="Ansari Y."/>
            <person name="Arakawa T."/>
            <person name="Banh J."/>
            <person name="Banno F."/>
            <person name="Bowser L."/>
            <person name="Brooks S.Y."/>
            <person name="Carninci P."/>
            <person name="Chao Q."/>
            <person name="Choy N."/>
            <person name="Enju A."/>
            <person name="Goldsmith A.D."/>
            <person name="Gurjal M."/>
            <person name="Hansen N.F."/>
            <person name="Hayashizaki Y."/>
            <person name="Johnson-Hopson C."/>
            <person name="Hsuan V.W."/>
            <person name="Iida K."/>
            <person name="Karnes M."/>
            <person name="Khan S."/>
            <person name="Koesema E."/>
            <person name="Ishida J."/>
            <person name="Jiang P.X."/>
            <person name="Jones T."/>
            <person name="Kawai J."/>
            <person name="Kamiya A."/>
            <person name="Meyers C."/>
            <person name="Nakajima M."/>
            <person name="Narusaka M."/>
            <person name="Seki M."/>
            <person name="Sakurai T."/>
            <person name="Satou M."/>
            <person name="Tamse R."/>
            <person name="Vaysberg M."/>
            <person name="Wallender E.K."/>
            <person name="Wong C."/>
            <person name="Yamamura Y."/>
            <person name="Yuan S."/>
            <person name="Shinozaki K."/>
            <person name="Davis R.W."/>
            <person name="Theologis A."/>
            <person name="Ecker J.R."/>
        </authorList>
    </citation>
    <scope>NUCLEOTIDE SEQUENCE [LARGE SCALE MRNA]</scope>
    <source>
        <strain>cv. Columbia</strain>
    </source>
</reference>
<reference key="4">
    <citation type="journal article" date="2001" name="Plant Physiol.">
        <title>A superfamily of proteins with novel cysteine-rich repeats.</title>
        <authorList>
            <person name="Chen Z."/>
        </authorList>
    </citation>
    <scope>GENE FAMILY ORGANIZATION</scope>
    <scope>NOMENCLATURE</scope>
</reference>
<feature type="signal peptide" evidence="2">
    <location>
        <begin position="1"/>
        <end position="23"/>
    </location>
</feature>
<feature type="chain" id="PRO_0000295054" description="Cysteine-rich receptor-like protein kinase 7">
    <location>
        <begin position="24"/>
        <end position="659"/>
    </location>
</feature>
<feature type="topological domain" description="Extracellular" evidence="2">
    <location>
        <begin position="24"/>
        <end position="273"/>
    </location>
</feature>
<feature type="transmembrane region" description="Helical" evidence="2">
    <location>
        <begin position="274"/>
        <end position="294"/>
    </location>
</feature>
<feature type="topological domain" description="Cytoplasmic" evidence="2">
    <location>
        <begin position="295"/>
        <end position="659"/>
    </location>
</feature>
<feature type="domain" description="Gnk2-homologous 1" evidence="4">
    <location>
        <begin position="27"/>
        <end position="131"/>
    </location>
</feature>
<feature type="domain" description="Gnk2-homologous 2" evidence="4">
    <location>
        <begin position="142"/>
        <end position="244"/>
    </location>
</feature>
<feature type="domain" description="Protein kinase" evidence="3">
    <location>
        <begin position="336"/>
        <end position="622"/>
    </location>
</feature>
<feature type="region of interest" description="Disordered" evidence="6">
    <location>
        <begin position="626"/>
        <end position="659"/>
    </location>
</feature>
<feature type="compositionally biased region" description="Polar residues" evidence="6">
    <location>
        <begin position="636"/>
        <end position="646"/>
    </location>
</feature>
<feature type="compositionally biased region" description="Basic and acidic residues" evidence="6">
    <location>
        <begin position="648"/>
        <end position="659"/>
    </location>
</feature>
<feature type="active site" description="Proton acceptor" evidence="3 5">
    <location>
        <position position="461"/>
    </location>
</feature>
<feature type="binding site" evidence="3">
    <location>
        <begin position="342"/>
        <end position="350"/>
    </location>
    <ligand>
        <name>ATP</name>
        <dbReference type="ChEBI" id="CHEBI:30616"/>
    </ligand>
</feature>
<feature type="binding site" evidence="3">
    <location>
        <position position="364"/>
    </location>
    <ligand>
        <name>ATP</name>
        <dbReference type="ChEBI" id="CHEBI:30616"/>
    </ligand>
</feature>
<feature type="modified residue" description="Phosphotyrosine" evidence="1">
    <location>
        <position position="409"/>
    </location>
</feature>
<feature type="modified residue" description="Phosphoserine" evidence="1">
    <location>
        <position position="465"/>
    </location>
</feature>
<feature type="modified residue" description="Phosphothreonine" evidence="1">
    <location>
        <position position="501"/>
    </location>
</feature>
<feature type="modified residue" description="Phosphotyrosine" evidence="1">
    <location>
        <position position="509"/>
    </location>
</feature>
<feature type="glycosylation site" description="N-linked (GlcNAc...) asparagine" evidence="2">
    <location>
        <position position="35"/>
    </location>
</feature>
<feature type="glycosylation site" description="N-linked (GlcNAc...) asparagine" evidence="2">
    <location>
        <position position="42"/>
    </location>
</feature>
<feature type="glycosylation site" description="N-linked (GlcNAc...) asparagine" evidence="2">
    <location>
        <position position="60"/>
    </location>
</feature>
<feature type="glycosylation site" description="N-linked (GlcNAc...) asparagine" evidence="2">
    <location>
        <position position="69"/>
    </location>
</feature>
<feature type="glycosylation site" description="N-linked (GlcNAc...) asparagine" evidence="2">
    <location>
        <position position="103"/>
    </location>
</feature>
<feature type="glycosylation site" description="N-linked (GlcNAc...) asparagine" evidence="2">
    <location>
        <position position="246"/>
    </location>
</feature>
<accession>Q8L7G3</accession>
<accession>O65467</accession>
<comment type="catalytic activity">
    <reaction>
        <text>L-seryl-[protein] + ATP = O-phospho-L-seryl-[protein] + ADP + H(+)</text>
        <dbReference type="Rhea" id="RHEA:17989"/>
        <dbReference type="Rhea" id="RHEA-COMP:9863"/>
        <dbReference type="Rhea" id="RHEA-COMP:11604"/>
        <dbReference type="ChEBI" id="CHEBI:15378"/>
        <dbReference type="ChEBI" id="CHEBI:29999"/>
        <dbReference type="ChEBI" id="CHEBI:30616"/>
        <dbReference type="ChEBI" id="CHEBI:83421"/>
        <dbReference type="ChEBI" id="CHEBI:456216"/>
    </reaction>
</comment>
<comment type="catalytic activity">
    <reaction>
        <text>L-threonyl-[protein] + ATP = O-phospho-L-threonyl-[protein] + ADP + H(+)</text>
        <dbReference type="Rhea" id="RHEA:46608"/>
        <dbReference type="Rhea" id="RHEA-COMP:11060"/>
        <dbReference type="Rhea" id="RHEA-COMP:11605"/>
        <dbReference type="ChEBI" id="CHEBI:15378"/>
        <dbReference type="ChEBI" id="CHEBI:30013"/>
        <dbReference type="ChEBI" id="CHEBI:30616"/>
        <dbReference type="ChEBI" id="CHEBI:61977"/>
        <dbReference type="ChEBI" id="CHEBI:456216"/>
    </reaction>
</comment>
<comment type="subcellular location">
    <subcellularLocation>
        <location evidence="7">Membrane</location>
        <topology evidence="7">Single-pass membrane protein</topology>
    </subcellularLocation>
</comment>
<comment type="similarity">
    <text evidence="3">Belongs to the protein kinase superfamily. Ser/Thr protein kinase family. CRK subfamily.</text>
</comment>
<comment type="sequence caution" evidence="7">
    <conflict type="erroneous gene model prediction">
        <sequence resource="EMBL-CDS" id="CAA18462"/>
    </conflict>
</comment>
<comment type="sequence caution" evidence="7">
    <conflict type="erroneous gene model prediction">
        <sequence resource="EMBL-CDS" id="CAB79270"/>
    </conflict>
</comment>
<organism>
    <name type="scientific">Arabidopsis thaliana</name>
    <name type="common">Mouse-ear cress</name>
    <dbReference type="NCBI Taxonomy" id="3702"/>
    <lineage>
        <taxon>Eukaryota</taxon>
        <taxon>Viridiplantae</taxon>
        <taxon>Streptophyta</taxon>
        <taxon>Embryophyta</taxon>
        <taxon>Tracheophyta</taxon>
        <taxon>Spermatophyta</taxon>
        <taxon>Magnoliopsida</taxon>
        <taxon>eudicotyledons</taxon>
        <taxon>Gunneridae</taxon>
        <taxon>Pentapetalae</taxon>
        <taxon>rosids</taxon>
        <taxon>malvids</taxon>
        <taxon>Brassicales</taxon>
        <taxon>Brassicaceae</taxon>
        <taxon>Camelineae</taxon>
        <taxon>Arabidopsis</taxon>
    </lineage>
</organism>
<proteinExistence type="evidence at transcript level"/>
<sequence>MSSLFPFIFLFLFSFLTSFRASAQDPRFLAYYCPNATTYSSNSTYLTNLKTLLSSLSSRNASYSTGFQNATVGQALDRVTGLFLCRGDVSPEVCRNCVTFAVNNTFSRCPNQREAVFYYEECILRYSHKNILSTAITNEGEFILRNPNHISPIQNQINQFTNLVLSNMNQIAIEAADNPRKFSTIKTELTALQTFYGLVQCTPDLSRQNCMNCLTSSINRMPFSRIGARQFWPSCNSRYELYDFYNETAIGTPPPPLPPLASPSLSDKSGNSNVVVVAVVVPIIVAVLIFIAGYCFFAKRAKKTYGTTPALDEDDKTTIESLQLDYRAIQAATNDFSENNKIGRGGFGDVYKGTFSNGTEVAVKRLSKTSEQGDTEFKNEVVVVANLRHKNLVRILGFSIEREERILVYEYVENKSLDNFLFDPAKKGQLYWTQRYHIIGGIARGILYLHQDSRLTIIHRDLKASNILLDADMNPKIADFGMARIFGMDQTQQNTSRIVGTYGYMSPEYAMRGQFSMKSDVYSFGVLVLEIISGRKNNSFIETDDAQDLVTHAWRLWRNGTALDLVDPFIADSCRKSEVVRCTHIGLLCVQEDPVKRPAMSTISVMLTSNTMALPAPQQPGFFVRSRPGTNRLDSDQSTTNKSVTVSIDDKSMSDLDPR</sequence>
<dbReference type="EC" id="2.7.11.-"/>
<dbReference type="EMBL" id="AL022347">
    <property type="protein sequence ID" value="CAA18462.1"/>
    <property type="status" value="ALT_SEQ"/>
    <property type="molecule type" value="Genomic_DNA"/>
</dbReference>
<dbReference type="EMBL" id="AL161558">
    <property type="protein sequence ID" value="CAB79270.1"/>
    <property type="status" value="ALT_SEQ"/>
    <property type="molecule type" value="Genomic_DNA"/>
</dbReference>
<dbReference type="EMBL" id="CP002687">
    <property type="protein sequence ID" value="AEE84716.1"/>
    <property type="molecule type" value="Genomic_DNA"/>
</dbReference>
<dbReference type="EMBL" id="AY133720">
    <property type="protein sequence ID" value="AAM91654.1"/>
    <property type="molecule type" value="mRNA"/>
</dbReference>
<dbReference type="PIR" id="T04832">
    <property type="entry name" value="T04832"/>
</dbReference>
<dbReference type="RefSeq" id="NP_194046.2">
    <property type="nucleotide sequence ID" value="NM_118444.3"/>
</dbReference>
<dbReference type="SMR" id="Q8L7G3"/>
<dbReference type="BioGRID" id="13703">
    <property type="interactions" value="9"/>
</dbReference>
<dbReference type="FunCoup" id="Q8L7G3">
    <property type="interactions" value="289"/>
</dbReference>
<dbReference type="IntAct" id="Q8L7G3">
    <property type="interactions" value="5"/>
</dbReference>
<dbReference type="STRING" id="3702.Q8L7G3"/>
<dbReference type="GlyCosmos" id="Q8L7G3">
    <property type="glycosylation" value="6 sites, No reported glycans"/>
</dbReference>
<dbReference type="GlyGen" id="Q8L7G3">
    <property type="glycosylation" value="6 sites"/>
</dbReference>
<dbReference type="PaxDb" id="3702-AT4G23150.1"/>
<dbReference type="ProteomicsDB" id="224418"/>
<dbReference type="EnsemblPlants" id="AT4G23150.1">
    <property type="protein sequence ID" value="AT4G23150.1"/>
    <property type="gene ID" value="AT4G23150"/>
</dbReference>
<dbReference type="GeneID" id="828414"/>
<dbReference type="Gramene" id="AT4G23150.1">
    <property type="protein sequence ID" value="AT4G23150.1"/>
    <property type="gene ID" value="AT4G23150"/>
</dbReference>
<dbReference type="KEGG" id="ath:AT4G23150"/>
<dbReference type="Araport" id="AT4G23150"/>
<dbReference type="TAIR" id="AT4G23150">
    <property type="gene designation" value="CRK7"/>
</dbReference>
<dbReference type="eggNOG" id="ENOG502QWDY">
    <property type="taxonomic scope" value="Eukaryota"/>
</dbReference>
<dbReference type="HOGENOM" id="CLU_000288_35_7_1"/>
<dbReference type="InParanoid" id="Q8L7G3"/>
<dbReference type="OMA" id="ACAECIT"/>
<dbReference type="PhylomeDB" id="Q8L7G3"/>
<dbReference type="PRO" id="PR:Q8L7G3"/>
<dbReference type="Proteomes" id="UP000006548">
    <property type="component" value="Chromosome 4"/>
</dbReference>
<dbReference type="ExpressionAtlas" id="Q8L7G3">
    <property type="expression patterns" value="baseline and differential"/>
</dbReference>
<dbReference type="GO" id="GO:0016020">
    <property type="term" value="C:membrane"/>
    <property type="evidence" value="ECO:0007669"/>
    <property type="project" value="UniProtKB-SubCell"/>
</dbReference>
<dbReference type="GO" id="GO:0005524">
    <property type="term" value="F:ATP binding"/>
    <property type="evidence" value="ECO:0007669"/>
    <property type="project" value="UniProtKB-KW"/>
</dbReference>
<dbReference type="GO" id="GO:0004672">
    <property type="term" value="F:protein kinase activity"/>
    <property type="evidence" value="ECO:0000314"/>
    <property type="project" value="TAIR"/>
</dbReference>
<dbReference type="GO" id="GO:0106310">
    <property type="term" value="F:protein serine kinase activity"/>
    <property type="evidence" value="ECO:0007669"/>
    <property type="project" value="RHEA"/>
</dbReference>
<dbReference type="GO" id="GO:0004674">
    <property type="term" value="F:protein serine/threonine kinase activity"/>
    <property type="evidence" value="ECO:0007669"/>
    <property type="project" value="UniProtKB-KW"/>
</dbReference>
<dbReference type="GO" id="GO:0000302">
    <property type="term" value="P:response to reactive oxygen species"/>
    <property type="evidence" value="ECO:0000270"/>
    <property type="project" value="TAIR"/>
</dbReference>
<dbReference type="CDD" id="cd23509">
    <property type="entry name" value="Gnk2-like"/>
    <property type="match status" value="2"/>
</dbReference>
<dbReference type="CDD" id="cd14066">
    <property type="entry name" value="STKc_IRAK"/>
    <property type="match status" value="1"/>
</dbReference>
<dbReference type="FunFam" id="3.30.430.20:FF:000002">
    <property type="entry name" value="Cysteine-rich receptor-like protein kinase 10"/>
    <property type="match status" value="1"/>
</dbReference>
<dbReference type="FunFam" id="1.10.510.10:FF:000129">
    <property type="entry name" value="cysteine-rich receptor-like protein kinase 10"/>
    <property type="match status" value="1"/>
</dbReference>
<dbReference type="FunFam" id="3.30.430.20:FF:000003">
    <property type="entry name" value="Cysteine-rich RLK (RECEPTOR-like protein kinase) 10"/>
    <property type="match status" value="1"/>
</dbReference>
<dbReference type="FunFam" id="3.30.200.20:FF:001331">
    <property type="entry name" value="Cysteine-rich RLK (RECEPTOR-like protein kinase) 13"/>
    <property type="match status" value="1"/>
</dbReference>
<dbReference type="Gene3D" id="3.30.430.20">
    <property type="entry name" value="Gnk2 domain, C-X8-C-X2-C motif"/>
    <property type="match status" value="2"/>
</dbReference>
<dbReference type="Gene3D" id="3.30.200.20">
    <property type="entry name" value="Phosphorylase Kinase, domain 1"/>
    <property type="match status" value="1"/>
</dbReference>
<dbReference type="Gene3D" id="1.10.510.10">
    <property type="entry name" value="Transferase(Phosphotransferase) domain 1"/>
    <property type="match status" value="1"/>
</dbReference>
<dbReference type="InterPro" id="IPR002902">
    <property type="entry name" value="GNK2"/>
</dbReference>
<dbReference type="InterPro" id="IPR038408">
    <property type="entry name" value="GNK2_sf"/>
</dbReference>
<dbReference type="InterPro" id="IPR011009">
    <property type="entry name" value="Kinase-like_dom_sf"/>
</dbReference>
<dbReference type="InterPro" id="IPR000719">
    <property type="entry name" value="Prot_kinase_dom"/>
</dbReference>
<dbReference type="InterPro" id="IPR017441">
    <property type="entry name" value="Protein_kinase_ATP_BS"/>
</dbReference>
<dbReference type="InterPro" id="IPR001245">
    <property type="entry name" value="Ser-Thr/Tyr_kinase_cat_dom"/>
</dbReference>
<dbReference type="InterPro" id="IPR008271">
    <property type="entry name" value="Ser/Thr_kinase_AS"/>
</dbReference>
<dbReference type="PANTHER" id="PTHR27002:SF1001">
    <property type="entry name" value="CYSTEINE-RICH RECEPTOR-LIKE PROTEIN KINASE 10-RELATED"/>
    <property type="match status" value="1"/>
</dbReference>
<dbReference type="PANTHER" id="PTHR27002">
    <property type="entry name" value="RECEPTOR-LIKE SERINE/THREONINE-PROTEIN KINASE SD1-8"/>
    <property type="match status" value="1"/>
</dbReference>
<dbReference type="Pfam" id="PF07714">
    <property type="entry name" value="PK_Tyr_Ser-Thr"/>
    <property type="match status" value="1"/>
</dbReference>
<dbReference type="Pfam" id="PF01657">
    <property type="entry name" value="Stress-antifung"/>
    <property type="match status" value="2"/>
</dbReference>
<dbReference type="SMART" id="SM00220">
    <property type="entry name" value="S_TKc"/>
    <property type="match status" value="1"/>
</dbReference>
<dbReference type="SUPFAM" id="SSF56112">
    <property type="entry name" value="Protein kinase-like (PK-like)"/>
    <property type="match status" value="1"/>
</dbReference>
<dbReference type="PROSITE" id="PS51473">
    <property type="entry name" value="GNK2"/>
    <property type="match status" value="2"/>
</dbReference>
<dbReference type="PROSITE" id="PS00107">
    <property type="entry name" value="PROTEIN_KINASE_ATP"/>
    <property type="match status" value="1"/>
</dbReference>
<dbReference type="PROSITE" id="PS50011">
    <property type="entry name" value="PROTEIN_KINASE_DOM"/>
    <property type="match status" value="1"/>
</dbReference>
<dbReference type="PROSITE" id="PS00108">
    <property type="entry name" value="PROTEIN_KINASE_ST"/>
    <property type="match status" value="1"/>
</dbReference>